<proteinExistence type="evidence at protein level"/>
<reference key="1">
    <citation type="journal article" date="1997" name="J. Biol. Chem.">
        <title>An eps homology (EH) domain protein that binds to the ral-GTPase target, RalBP1.</title>
        <authorList>
            <person name="Yamaguchi A."/>
            <person name="Urano T."/>
            <person name="Goi T."/>
            <person name="Feig L.A."/>
        </authorList>
    </citation>
    <scope>NUCLEOTIDE SEQUENCE [MRNA] (ISOFORM 4)</scope>
    <scope>CHARACTERIZATION</scope>
    <source>
        <tissue>Muscle</tissue>
    </source>
</reference>
<reference key="2">
    <citation type="journal article" date="2005" name="Science">
        <title>The transcriptional landscape of the mammalian genome.</title>
        <authorList>
            <person name="Carninci P."/>
            <person name="Kasukawa T."/>
            <person name="Katayama S."/>
            <person name="Gough J."/>
            <person name="Frith M.C."/>
            <person name="Maeda N."/>
            <person name="Oyama R."/>
            <person name="Ravasi T."/>
            <person name="Lenhard B."/>
            <person name="Wells C."/>
            <person name="Kodzius R."/>
            <person name="Shimokawa K."/>
            <person name="Bajic V.B."/>
            <person name="Brenner S.E."/>
            <person name="Batalov S."/>
            <person name="Forrest A.R."/>
            <person name="Zavolan M."/>
            <person name="Davis M.J."/>
            <person name="Wilming L.G."/>
            <person name="Aidinis V."/>
            <person name="Allen J.E."/>
            <person name="Ambesi-Impiombato A."/>
            <person name="Apweiler R."/>
            <person name="Aturaliya R.N."/>
            <person name="Bailey T.L."/>
            <person name="Bansal M."/>
            <person name="Baxter L."/>
            <person name="Beisel K.W."/>
            <person name="Bersano T."/>
            <person name="Bono H."/>
            <person name="Chalk A.M."/>
            <person name="Chiu K.P."/>
            <person name="Choudhary V."/>
            <person name="Christoffels A."/>
            <person name="Clutterbuck D.R."/>
            <person name="Crowe M.L."/>
            <person name="Dalla E."/>
            <person name="Dalrymple B.P."/>
            <person name="de Bono B."/>
            <person name="Della Gatta G."/>
            <person name="di Bernardo D."/>
            <person name="Down T."/>
            <person name="Engstrom P."/>
            <person name="Fagiolini M."/>
            <person name="Faulkner G."/>
            <person name="Fletcher C.F."/>
            <person name="Fukushima T."/>
            <person name="Furuno M."/>
            <person name="Futaki S."/>
            <person name="Gariboldi M."/>
            <person name="Georgii-Hemming P."/>
            <person name="Gingeras T.R."/>
            <person name="Gojobori T."/>
            <person name="Green R.E."/>
            <person name="Gustincich S."/>
            <person name="Harbers M."/>
            <person name="Hayashi Y."/>
            <person name="Hensch T.K."/>
            <person name="Hirokawa N."/>
            <person name="Hill D."/>
            <person name="Huminiecki L."/>
            <person name="Iacono M."/>
            <person name="Ikeo K."/>
            <person name="Iwama A."/>
            <person name="Ishikawa T."/>
            <person name="Jakt M."/>
            <person name="Kanapin A."/>
            <person name="Katoh M."/>
            <person name="Kawasawa Y."/>
            <person name="Kelso J."/>
            <person name="Kitamura H."/>
            <person name="Kitano H."/>
            <person name="Kollias G."/>
            <person name="Krishnan S.P."/>
            <person name="Kruger A."/>
            <person name="Kummerfeld S.K."/>
            <person name="Kurochkin I.V."/>
            <person name="Lareau L.F."/>
            <person name="Lazarevic D."/>
            <person name="Lipovich L."/>
            <person name="Liu J."/>
            <person name="Liuni S."/>
            <person name="McWilliam S."/>
            <person name="Madan Babu M."/>
            <person name="Madera M."/>
            <person name="Marchionni L."/>
            <person name="Matsuda H."/>
            <person name="Matsuzawa S."/>
            <person name="Miki H."/>
            <person name="Mignone F."/>
            <person name="Miyake S."/>
            <person name="Morris K."/>
            <person name="Mottagui-Tabar S."/>
            <person name="Mulder N."/>
            <person name="Nakano N."/>
            <person name="Nakauchi H."/>
            <person name="Ng P."/>
            <person name="Nilsson R."/>
            <person name="Nishiguchi S."/>
            <person name="Nishikawa S."/>
            <person name="Nori F."/>
            <person name="Ohara O."/>
            <person name="Okazaki Y."/>
            <person name="Orlando V."/>
            <person name="Pang K.C."/>
            <person name="Pavan W.J."/>
            <person name="Pavesi G."/>
            <person name="Pesole G."/>
            <person name="Petrovsky N."/>
            <person name="Piazza S."/>
            <person name="Reed J."/>
            <person name="Reid J.F."/>
            <person name="Ring B.Z."/>
            <person name="Ringwald M."/>
            <person name="Rost B."/>
            <person name="Ruan Y."/>
            <person name="Salzberg S.L."/>
            <person name="Sandelin A."/>
            <person name="Schneider C."/>
            <person name="Schoenbach C."/>
            <person name="Sekiguchi K."/>
            <person name="Semple C.A."/>
            <person name="Seno S."/>
            <person name="Sessa L."/>
            <person name="Sheng Y."/>
            <person name="Shibata Y."/>
            <person name="Shimada H."/>
            <person name="Shimada K."/>
            <person name="Silva D."/>
            <person name="Sinclair B."/>
            <person name="Sperling S."/>
            <person name="Stupka E."/>
            <person name="Sugiura K."/>
            <person name="Sultana R."/>
            <person name="Takenaka Y."/>
            <person name="Taki K."/>
            <person name="Tammoja K."/>
            <person name="Tan S.L."/>
            <person name="Tang S."/>
            <person name="Taylor M.S."/>
            <person name="Tegner J."/>
            <person name="Teichmann S.A."/>
            <person name="Ueda H.R."/>
            <person name="van Nimwegen E."/>
            <person name="Verardo R."/>
            <person name="Wei C.L."/>
            <person name="Yagi K."/>
            <person name="Yamanishi H."/>
            <person name="Zabarovsky E."/>
            <person name="Zhu S."/>
            <person name="Zimmer A."/>
            <person name="Hide W."/>
            <person name="Bult C."/>
            <person name="Grimmond S.M."/>
            <person name="Teasdale R.D."/>
            <person name="Liu E.T."/>
            <person name="Brusic V."/>
            <person name="Quackenbush J."/>
            <person name="Wahlestedt C."/>
            <person name="Mattick J.S."/>
            <person name="Hume D.A."/>
            <person name="Kai C."/>
            <person name="Sasaki D."/>
            <person name="Tomaru Y."/>
            <person name="Fukuda S."/>
            <person name="Kanamori-Katayama M."/>
            <person name="Suzuki M."/>
            <person name="Aoki J."/>
            <person name="Arakawa T."/>
            <person name="Iida J."/>
            <person name="Imamura K."/>
            <person name="Itoh M."/>
            <person name="Kato T."/>
            <person name="Kawaji H."/>
            <person name="Kawagashira N."/>
            <person name="Kawashima T."/>
            <person name="Kojima M."/>
            <person name="Kondo S."/>
            <person name="Konno H."/>
            <person name="Nakano K."/>
            <person name="Ninomiya N."/>
            <person name="Nishio T."/>
            <person name="Okada M."/>
            <person name="Plessy C."/>
            <person name="Shibata K."/>
            <person name="Shiraki T."/>
            <person name="Suzuki S."/>
            <person name="Tagami M."/>
            <person name="Waki K."/>
            <person name="Watahiki A."/>
            <person name="Okamura-Oho Y."/>
            <person name="Suzuki H."/>
            <person name="Kawai J."/>
            <person name="Hayashizaki Y."/>
        </authorList>
    </citation>
    <scope>NUCLEOTIDE SEQUENCE [LARGE SCALE MRNA] (ISOFORM 2)</scope>
    <scope>NUCLEOTIDE SEQUENCE [LARGE SCALE MRNA] OF 39-795 (ISOFORM 1)</scope>
    <source>
        <strain>C57BL/6J</strain>
        <tissue>Bone marrow</tissue>
        <tissue>Thymus</tissue>
    </source>
</reference>
<reference key="3">
    <citation type="journal article" date="2009" name="PLoS Biol.">
        <title>Lineage-specific biology revealed by a finished genome assembly of the mouse.</title>
        <authorList>
            <person name="Church D.M."/>
            <person name="Goodstadt L."/>
            <person name="Hillier L.W."/>
            <person name="Zody M.C."/>
            <person name="Goldstein S."/>
            <person name="She X."/>
            <person name="Bult C.J."/>
            <person name="Agarwala R."/>
            <person name="Cherry J.L."/>
            <person name="DiCuccio M."/>
            <person name="Hlavina W."/>
            <person name="Kapustin Y."/>
            <person name="Meric P."/>
            <person name="Maglott D."/>
            <person name="Birtle Z."/>
            <person name="Marques A.C."/>
            <person name="Graves T."/>
            <person name="Zhou S."/>
            <person name="Teague B."/>
            <person name="Potamousis K."/>
            <person name="Churas C."/>
            <person name="Place M."/>
            <person name="Herschleb J."/>
            <person name="Runnheim R."/>
            <person name="Forrest D."/>
            <person name="Amos-Landgraf J."/>
            <person name="Schwartz D.C."/>
            <person name="Cheng Z."/>
            <person name="Lindblad-Toh K."/>
            <person name="Eichler E.E."/>
            <person name="Ponting C.P."/>
        </authorList>
    </citation>
    <scope>NUCLEOTIDE SEQUENCE [LARGE SCALE GENOMIC DNA]</scope>
    <source>
        <strain>C57BL/6J</strain>
    </source>
</reference>
<reference key="4">
    <citation type="journal article" date="2004" name="Genome Res.">
        <title>The status, quality, and expansion of the NIH full-length cDNA project: the Mammalian Gene Collection (MGC).</title>
        <authorList>
            <consortium name="The MGC Project Team"/>
        </authorList>
    </citation>
    <scope>NUCLEOTIDE SEQUENCE [LARGE SCALE MRNA] (ISOFORM 3)</scope>
    <scope>NUCLEOTIDE SEQUENCE [LARGE SCALE MRNA] OF 499-795 (ISOFORM 1)</scope>
    <source>
        <tissue>Embryo</tissue>
        <tissue>Mammary tumor</tissue>
    </source>
</reference>
<reference key="5">
    <citation type="journal article" date="2007" name="Proc. Natl. Acad. Sci. U.S.A.">
        <title>Large-scale phosphorylation analysis of mouse liver.</title>
        <authorList>
            <person name="Villen J."/>
            <person name="Beausoleil S.A."/>
            <person name="Gerber S.A."/>
            <person name="Gygi S.P."/>
        </authorList>
    </citation>
    <scope>PHOSPHORYLATION [LARGE SCALE ANALYSIS] AT SER-272</scope>
    <scope>IDENTIFICATION BY MASS SPECTROMETRY [LARGE SCALE ANALYSIS]</scope>
    <source>
        <tissue>Liver</tissue>
    </source>
</reference>
<reference key="6">
    <citation type="journal article" date="2009" name="Immunity">
        <title>The phagosomal proteome in interferon-gamma-activated macrophages.</title>
        <authorList>
            <person name="Trost M."/>
            <person name="English L."/>
            <person name="Lemieux S."/>
            <person name="Courcelles M."/>
            <person name="Desjardins M."/>
            <person name="Thibault P."/>
        </authorList>
    </citation>
    <scope>PHOSPHORYLATION [LARGE SCALE ANALYSIS] AT SER-708</scope>
    <scope>IDENTIFICATION BY MASS SPECTROMETRY [LARGE SCALE ANALYSIS]</scope>
</reference>
<reference key="7">
    <citation type="journal article" date="2010" name="Cell">
        <title>A tissue-specific atlas of mouse protein phosphorylation and expression.</title>
        <authorList>
            <person name="Huttlin E.L."/>
            <person name="Jedrychowski M.P."/>
            <person name="Elias J.E."/>
            <person name="Goswami T."/>
            <person name="Rad R."/>
            <person name="Beausoleil S.A."/>
            <person name="Villen J."/>
            <person name="Haas W."/>
            <person name="Sowa M.E."/>
            <person name="Gygi S.P."/>
        </authorList>
    </citation>
    <scope>PHOSPHORYLATION [LARGE SCALE ANALYSIS] AT SER-272; SER-273; SER-539 AND THR-543</scope>
    <scope>IDENTIFICATION BY MASS SPECTROMETRY [LARGE SCALE ANALYSIS]</scope>
    <source>
        <tissue>Brain</tissue>
        <tissue>Brown adipose tissue</tissue>
        <tissue>Heart</tissue>
        <tissue>Kidney</tissue>
        <tissue>Liver</tissue>
        <tissue>Lung</tissue>
        <tissue>Pancreas</tissue>
        <tissue>Spleen</tissue>
        <tissue>Testis</tissue>
    </source>
</reference>
<reference key="8">
    <citation type="journal article" date="2001" name="Biochemistry">
        <title>Solution structure of the Reps1 EH domain and characterization of its binding to NPF target sequences.</title>
        <authorList>
            <person name="Kim S."/>
            <person name="Cullis D.N."/>
            <person name="Feig L.A."/>
            <person name="Baleja J.D."/>
        </authorList>
    </citation>
    <scope>STRUCTURE BY NMR OF 279-370</scope>
</reference>
<sequence length="795" mass="86519">MEGLTLSDAEQKYYSDLFSYCDIESTKKVVVNGRVLELFRAAQLPNDVVLQIMELCGATRLGYFGRSQFYIALKLVAVAQSGFPLRVESINTVKDLPLPRFVASKNEQESRLAASYSSDSENQGSYSGVIPPPPGRGQVKKGPGSHDAVQPRPSAEQQEPVSPVVSPQQSPPTSPHTWRKHSRHPSGGNSERPLTGPGPFWSPFGDAQAGSSAGDAVWSGQSPPPPQDNWVSFADTPPTSALLTMHPASVQDQTTVRTVASAATANEIRRQSSSYEDPWKITDEQRQYYVNQFKTIQPDLNGFIPGSAAKEFFTKSKLPILELSHIWELSDFDKDGALTLDEFCAAFHLVVARKNGYDLPEKLPESLMPKLIDLEDSADVGEQPGEVGYSGSPAEAPPSKSPSMPSLNQTWPELNQSSEQWETFSERSSSSQTLTQFDSNIAPADPDTAIVHPVPIRMTPSKIHMQEMELKRTSSDHTNPTSPLLVKPSDLSEENKINSSVKFPSGNTVDGYSSSDSFPSDPEQIGSSVTRQRSHSGTSPDNTAPPPPPPRPQPSHSRSSSLDMNRTFAVTTGQQQAGVVAHPPAVPPRPQPSQAPGPSVHRPVDADGLITHTSTSPQQIPEQPNFADFSQFEVFAASNVSEEQDSEAEKHPEVLPAEKASDPSSSLRAAQADSKAEEKTATNVPANVSKGTTPLAPPPKPVRRRLKSEDELRPDVDEHTQKTGVLAAVLTSQPSIPRSVGKDKKAIQASIRRNKETNTVLARLNSELQQQLKDVLEERISLEVQLEQLRPFSHL</sequence>
<protein>
    <recommendedName>
        <fullName>RalBP1-associated Eps domain-containing protein 1</fullName>
    </recommendedName>
    <alternativeName>
        <fullName>RalBP1-interacting protein 1</fullName>
    </alternativeName>
</protein>
<keyword id="KW-0002">3D-structure</keyword>
<keyword id="KW-0025">Alternative splicing</keyword>
<keyword id="KW-0106">Calcium</keyword>
<keyword id="KW-0168">Coated pit</keyword>
<keyword id="KW-0175">Coiled coil</keyword>
<keyword id="KW-0472">Membrane</keyword>
<keyword id="KW-0479">Metal-binding</keyword>
<keyword id="KW-0597">Phosphoprotein</keyword>
<keyword id="KW-1185">Reference proteome</keyword>
<keyword id="KW-0677">Repeat</keyword>
<organism>
    <name type="scientific">Mus musculus</name>
    <name type="common">Mouse</name>
    <dbReference type="NCBI Taxonomy" id="10090"/>
    <lineage>
        <taxon>Eukaryota</taxon>
        <taxon>Metazoa</taxon>
        <taxon>Chordata</taxon>
        <taxon>Craniata</taxon>
        <taxon>Vertebrata</taxon>
        <taxon>Euteleostomi</taxon>
        <taxon>Mammalia</taxon>
        <taxon>Eutheria</taxon>
        <taxon>Euarchontoglires</taxon>
        <taxon>Glires</taxon>
        <taxon>Rodentia</taxon>
        <taxon>Myomorpha</taxon>
        <taxon>Muroidea</taxon>
        <taxon>Muridae</taxon>
        <taxon>Murinae</taxon>
        <taxon>Mus</taxon>
        <taxon>Mus</taxon>
    </lineage>
</organism>
<dbReference type="EMBL" id="AF031939">
    <property type="protein sequence ID" value="AAB94736.1"/>
    <property type="molecule type" value="mRNA"/>
</dbReference>
<dbReference type="EMBL" id="AK150284">
    <property type="protein sequence ID" value="BAE29439.1"/>
    <property type="status" value="ALT_INIT"/>
    <property type="molecule type" value="mRNA"/>
</dbReference>
<dbReference type="EMBL" id="AK151309">
    <property type="protein sequence ID" value="BAE30291.1"/>
    <property type="status" value="ALT_INIT"/>
    <property type="molecule type" value="mRNA"/>
</dbReference>
<dbReference type="EMBL" id="AK041967">
    <property type="protein sequence ID" value="BAC31117.1"/>
    <property type="molecule type" value="mRNA"/>
</dbReference>
<dbReference type="EMBL" id="AC153433">
    <property type="status" value="NOT_ANNOTATED_CDS"/>
    <property type="molecule type" value="Genomic_DNA"/>
</dbReference>
<dbReference type="EMBL" id="BC002256">
    <property type="status" value="NOT_ANNOTATED_CDS"/>
    <property type="molecule type" value="mRNA"/>
</dbReference>
<dbReference type="EMBL" id="BC087547">
    <property type="protein sequence ID" value="AAH87547.1"/>
    <property type="molecule type" value="mRNA"/>
</dbReference>
<dbReference type="CCDS" id="CCDS23710.2">
    <molecule id="O54916-1"/>
</dbReference>
<dbReference type="PIR" id="T09173">
    <property type="entry name" value="T09173"/>
</dbReference>
<dbReference type="RefSeq" id="NP_001104535.1">
    <property type="nucleotide sequence ID" value="NM_001111065.1"/>
</dbReference>
<dbReference type="RefSeq" id="NP_033074.2">
    <molecule id="O54916-1"/>
    <property type="nucleotide sequence ID" value="NM_009048.3"/>
</dbReference>
<dbReference type="PDB" id="1FI6">
    <property type="method" value="NMR"/>
    <property type="chains" value="A=279-370"/>
</dbReference>
<dbReference type="PDBsum" id="1FI6"/>
<dbReference type="BMRB" id="O54916"/>
<dbReference type="SMR" id="O54916"/>
<dbReference type="BioGRID" id="202861">
    <property type="interactions" value="14"/>
</dbReference>
<dbReference type="CORUM" id="O54916"/>
<dbReference type="FunCoup" id="O54916">
    <property type="interactions" value="4987"/>
</dbReference>
<dbReference type="IntAct" id="O54916">
    <property type="interactions" value="2"/>
</dbReference>
<dbReference type="STRING" id="10090.ENSMUSP00000123238"/>
<dbReference type="GlyGen" id="O54916">
    <property type="glycosylation" value="3 sites, 1 O-linked glycan (2 sites)"/>
</dbReference>
<dbReference type="iPTMnet" id="O54916"/>
<dbReference type="PhosphoSitePlus" id="O54916"/>
<dbReference type="SwissPalm" id="O54916"/>
<dbReference type="jPOST" id="O54916"/>
<dbReference type="PaxDb" id="10090-ENSMUSP00000123238"/>
<dbReference type="PeptideAtlas" id="O54916"/>
<dbReference type="ProteomicsDB" id="255283">
    <molecule id="O54916-1"/>
</dbReference>
<dbReference type="ProteomicsDB" id="255284">
    <molecule id="O54916-2"/>
</dbReference>
<dbReference type="ProteomicsDB" id="255285">
    <molecule id="O54916-3"/>
</dbReference>
<dbReference type="ProteomicsDB" id="255286">
    <molecule id="O54916-4"/>
</dbReference>
<dbReference type="Pumba" id="O54916"/>
<dbReference type="Antibodypedia" id="33064">
    <property type="antibodies" value="115 antibodies from 25 providers"/>
</dbReference>
<dbReference type="Ensembl" id="ENSMUST00000126390.8">
    <molecule id="O54916-1"/>
    <property type="protein sequence ID" value="ENSMUSP00000123238.2"/>
    <property type="gene ID" value="ENSMUSG00000019854.18"/>
</dbReference>
<dbReference type="GeneID" id="19707"/>
<dbReference type="KEGG" id="mmu:19707"/>
<dbReference type="UCSC" id="uc007ema.2">
    <molecule id="O54916-1"/>
    <property type="organism name" value="mouse"/>
</dbReference>
<dbReference type="AGR" id="MGI:1196373"/>
<dbReference type="CTD" id="85021"/>
<dbReference type="MGI" id="MGI:1196373">
    <property type="gene designation" value="Reps1"/>
</dbReference>
<dbReference type="VEuPathDB" id="HostDB:ENSMUSG00000019854"/>
<dbReference type="eggNOG" id="KOG1955">
    <property type="taxonomic scope" value="Eukaryota"/>
</dbReference>
<dbReference type="GeneTree" id="ENSGT00940000158749"/>
<dbReference type="HOGENOM" id="CLU_014864_0_0_1"/>
<dbReference type="InParanoid" id="O54916"/>
<dbReference type="OMA" id="QCCDVEN"/>
<dbReference type="OrthoDB" id="10045710at2759"/>
<dbReference type="PhylomeDB" id="O54916"/>
<dbReference type="TreeFam" id="TF316546"/>
<dbReference type="Reactome" id="R-MMU-8856825">
    <property type="pathway name" value="Cargo recognition for clathrin-mediated endocytosis"/>
</dbReference>
<dbReference type="Reactome" id="R-MMU-8856828">
    <property type="pathway name" value="Clathrin-mediated endocytosis"/>
</dbReference>
<dbReference type="BioGRID-ORCS" id="19707">
    <property type="hits" value="2 hits in 77 CRISPR screens"/>
</dbReference>
<dbReference type="ChiTaRS" id="Reps1">
    <property type="organism name" value="mouse"/>
</dbReference>
<dbReference type="EvolutionaryTrace" id="O54916"/>
<dbReference type="PRO" id="PR:O54916"/>
<dbReference type="Proteomes" id="UP000000589">
    <property type="component" value="Chromosome 10"/>
</dbReference>
<dbReference type="RNAct" id="O54916">
    <property type="molecule type" value="protein"/>
</dbReference>
<dbReference type="Bgee" id="ENSMUSG00000019854">
    <property type="expression patterns" value="Expressed in undifferentiated genital tubercle and 264 other cell types or tissues"/>
</dbReference>
<dbReference type="ExpressionAtlas" id="O54916">
    <property type="expression patterns" value="baseline and differential"/>
</dbReference>
<dbReference type="GO" id="GO:0005905">
    <property type="term" value="C:clathrin-coated pit"/>
    <property type="evidence" value="ECO:0007669"/>
    <property type="project" value="UniProtKB-SubCell"/>
</dbReference>
<dbReference type="GO" id="GO:0005829">
    <property type="term" value="C:cytosol"/>
    <property type="evidence" value="ECO:0007669"/>
    <property type="project" value="Ensembl"/>
</dbReference>
<dbReference type="GO" id="GO:0005654">
    <property type="term" value="C:nucleoplasm"/>
    <property type="evidence" value="ECO:0007669"/>
    <property type="project" value="Ensembl"/>
</dbReference>
<dbReference type="GO" id="GO:0005886">
    <property type="term" value="C:plasma membrane"/>
    <property type="evidence" value="ECO:0007669"/>
    <property type="project" value="Ensembl"/>
</dbReference>
<dbReference type="GO" id="GO:0005509">
    <property type="term" value="F:calcium ion binding"/>
    <property type="evidence" value="ECO:0007669"/>
    <property type="project" value="InterPro"/>
</dbReference>
<dbReference type="GO" id="GO:0017124">
    <property type="term" value="F:SH3 domain binding"/>
    <property type="evidence" value="ECO:0007669"/>
    <property type="project" value="Ensembl"/>
</dbReference>
<dbReference type="CDD" id="cd00052">
    <property type="entry name" value="EH"/>
    <property type="match status" value="1"/>
</dbReference>
<dbReference type="FunFam" id="1.10.238.10:FF:000084">
    <property type="entry name" value="ralBP1-associated Eps domain-containing protein 1 isoform X2"/>
    <property type="match status" value="1"/>
</dbReference>
<dbReference type="FunFam" id="1.10.238.10:FF:000039">
    <property type="entry name" value="RalBP1-associated Eps domain-containing protein 2 isoform 1"/>
    <property type="match status" value="1"/>
</dbReference>
<dbReference type="Gene3D" id="1.10.238.10">
    <property type="entry name" value="EF-hand"/>
    <property type="match status" value="2"/>
</dbReference>
<dbReference type="InterPro" id="IPR011992">
    <property type="entry name" value="EF-hand-dom_pair"/>
</dbReference>
<dbReference type="InterPro" id="IPR018247">
    <property type="entry name" value="EF_Hand_1_Ca_BS"/>
</dbReference>
<dbReference type="InterPro" id="IPR002048">
    <property type="entry name" value="EF_hand_dom"/>
</dbReference>
<dbReference type="InterPro" id="IPR000261">
    <property type="entry name" value="EH_dom"/>
</dbReference>
<dbReference type="PANTHER" id="PTHR11216">
    <property type="entry name" value="EH DOMAIN"/>
    <property type="match status" value="1"/>
</dbReference>
<dbReference type="PANTHER" id="PTHR11216:SF63">
    <property type="entry name" value="RALBP1-ASSOCIATED EPS DOMAIN-CONTAINING PROTEIN 1"/>
    <property type="match status" value="1"/>
</dbReference>
<dbReference type="Pfam" id="PF12763">
    <property type="entry name" value="EH"/>
    <property type="match status" value="2"/>
</dbReference>
<dbReference type="SMART" id="SM00027">
    <property type="entry name" value="EH"/>
    <property type="match status" value="2"/>
</dbReference>
<dbReference type="SUPFAM" id="SSF47473">
    <property type="entry name" value="EF-hand"/>
    <property type="match status" value="2"/>
</dbReference>
<dbReference type="PROSITE" id="PS00018">
    <property type="entry name" value="EF_HAND_1"/>
    <property type="match status" value="1"/>
</dbReference>
<dbReference type="PROSITE" id="PS50222">
    <property type="entry name" value="EF_HAND_2"/>
    <property type="match status" value="1"/>
</dbReference>
<dbReference type="PROSITE" id="PS50031">
    <property type="entry name" value="EH"/>
    <property type="match status" value="2"/>
</dbReference>
<name>REPS1_MOUSE</name>
<evidence type="ECO:0000250" key="1"/>
<evidence type="ECO:0000250" key="2">
    <source>
        <dbReference type="UniProtKB" id="Q96D71"/>
    </source>
</evidence>
<evidence type="ECO:0000255" key="3"/>
<evidence type="ECO:0000255" key="4">
    <source>
        <dbReference type="PROSITE-ProRule" id="PRU00077"/>
    </source>
</evidence>
<evidence type="ECO:0000255" key="5">
    <source>
        <dbReference type="PROSITE-ProRule" id="PRU00448"/>
    </source>
</evidence>
<evidence type="ECO:0000256" key="6">
    <source>
        <dbReference type="SAM" id="MobiDB-lite"/>
    </source>
</evidence>
<evidence type="ECO:0000303" key="7">
    <source>
    </source>
</evidence>
<evidence type="ECO:0000303" key="8">
    <source>
    </source>
</evidence>
<evidence type="ECO:0000303" key="9">
    <source>
    </source>
</evidence>
<evidence type="ECO:0000305" key="10"/>
<evidence type="ECO:0007744" key="11">
    <source>
    </source>
</evidence>
<evidence type="ECO:0007744" key="12">
    <source>
    </source>
</evidence>
<evidence type="ECO:0007744" key="13">
    <source>
    </source>
</evidence>
<evidence type="ECO:0007829" key="14">
    <source>
        <dbReference type="PDB" id="1FI6"/>
    </source>
</evidence>
<comment type="function">
    <text>May coordinate the cellular actions of activated EGF receptors and Ral-GTPases.</text>
</comment>
<comment type="subunit">
    <text evidence="1 10">Homodimer (Potential). Interacts with RALBP1, CRK and GRB2. Binding to RALBP1 does not affect its Ral-binding activity. Forms a complex with the SH3 domains of CRK and GRB2 which may link it to an EGF-responsive tyrosine kinase. Interacts with RAB11FIP2 (By similarity). Interacts with AMPH, ITSN1 (via SH3 domains) and SGIP1; may be involved in clathrin-mediated endocytosis (By similarity).</text>
</comment>
<comment type="subcellular location">
    <subcellularLocation>
        <location evidence="1">Membrane</location>
        <location evidence="1">Clathrin-coated pit</location>
    </subcellularLocation>
    <text evidence="1">Colocalize with ITSN1 at the plasma membrane in structures that are most probably clathrin-coated pits.</text>
</comment>
<comment type="alternative products">
    <event type="alternative splicing"/>
    <isoform>
        <id>O54916-1</id>
        <name>1</name>
        <sequence type="displayed"/>
    </isoform>
    <isoform>
        <id>O54916-2</id>
        <name>2</name>
        <sequence type="described" ref="VSP_038337 VSP_007956 VSP_007957"/>
    </isoform>
    <isoform>
        <id>O54916-3</id>
        <name>3</name>
        <sequence type="described" ref="VSP_038336 VSP_038338"/>
    </isoform>
    <isoform>
        <id>O54916-4</id>
        <name>4</name>
        <sequence type="described" ref="VSP_038336"/>
    </isoform>
</comment>
<comment type="tissue specificity">
    <text>Expressed in all tissues examined. The highest level expression was found in the kidney and testis.</text>
</comment>
<comment type="PTM">
    <text>EGF stimulates phosphorylation on Tyr-residues.</text>
</comment>
<comment type="miscellaneous">
    <molecule>Isoform 2</molecule>
    <text evidence="10">Due to intron retention.</text>
</comment>
<comment type="sequence caution" evidence="10">
    <conflict type="erroneous initiation">
        <sequence resource="EMBL-CDS" id="BAE29439"/>
    </conflict>
</comment>
<comment type="sequence caution" evidence="10">
    <conflict type="erroneous initiation">
        <sequence resource="EMBL-CDS" id="BAE30291"/>
    </conflict>
</comment>
<accession>O54916</accession>
<accession>Q3UAM3</accession>
<accession>Q5PPQ9</accession>
<accession>Q8C9J9</accession>
<accession>Q99LR8</accession>
<gene>
    <name type="primary">Reps1</name>
</gene>
<feature type="chain" id="PRO_0000073830" description="RalBP1-associated Eps domain-containing protein 1">
    <location>
        <begin position="1"/>
        <end position="795"/>
    </location>
</feature>
<feature type="domain" description="EH 1" evidence="4">
    <location>
        <begin position="10"/>
        <end position="113"/>
    </location>
</feature>
<feature type="domain" description="EH 2" evidence="4">
    <location>
        <begin position="285"/>
        <end position="374"/>
    </location>
</feature>
<feature type="domain" description="EF-hand" evidence="5">
    <location>
        <begin position="318"/>
        <end position="353"/>
    </location>
</feature>
<feature type="region of interest" description="Disordered" evidence="6">
    <location>
        <begin position="112"/>
        <end position="238"/>
    </location>
</feature>
<feature type="region of interest" description="Disordered" evidence="6">
    <location>
        <begin position="380"/>
        <end position="433"/>
    </location>
</feature>
<feature type="region of interest" description="Disordered" evidence="6">
    <location>
        <begin position="469"/>
        <end position="720"/>
    </location>
</feature>
<feature type="region of interest" description="Interaction with RALBP1">
    <location>
        <begin position="651"/>
        <end position="795"/>
    </location>
</feature>
<feature type="coiled-coil region" evidence="3">
    <location>
        <begin position="750"/>
        <end position="790"/>
    </location>
</feature>
<feature type="compositionally biased region" description="Polar residues" evidence="6">
    <location>
        <begin position="115"/>
        <end position="126"/>
    </location>
</feature>
<feature type="compositionally biased region" description="Low complexity" evidence="6">
    <location>
        <begin position="156"/>
        <end position="168"/>
    </location>
</feature>
<feature type="compositionally biased region" description="Low complexity" evidence="6">
    <location>
        <begin position="205"/>
        <end position="216"/>
    </location>
</feature>
<feature type="compositionally biased region" description="Polar residues" evidence="6">
    <location>
        <begin position="407"/>
        <end position="433"/>
    </location>
</feature>
<feature type="compositionally biased region" description="Polar residues" evidence="6">
    <location>
        <begin position="497"/>
        <end position="518"/>
    </location>
</feature>
<feature type="compositionally biased region" description="Polar residues" evidence="6">
    <location>
        <begin position="525"/>
        <end position="542"/>
    </location>
</feature>
<feature type="compositionally biased region" description="Pro residues" evidence="6">
    <location>
        <begin position="543"/>
        <end position="553"/>
    </location>
</feature>
<feature type="compositionally biased region" description="Polar residues" evidence="6">
    <location>
        <begin position="562"/>
        <end position="573"/>
    </location>
</feature>
<feature type="compositionally biased region" description="Low complexity" evidence="6">
    <location>
        <begin position="574"/>
        <end position="583"/>
    </location>
</feature>
<feature type="compositionally biased region" description="Pro residues" evidence="6">
    <location>
        <begin position="584"/>
        <end position="595"/>
    </location>
</feature>
<feature type="compositionally biased region" description="Polar residues" evidence="6">
    <location>
        <begin position="611"/>
        <end position="622"/>
    </location>
</feature>
<feature type="compositionally biased region" description="Polar residues" evidence="6">
    <location>
        <begin position="681"/>
        <end position="692"/>
    </location>
</feature>
<feature type="compositionally biased region" description="Basic and acidic residues" evidence="6">
    <location>
        <begin position="707"/>
        <end position="720"/>
    </location>
</feature>
<feature type="binding site" evidence="5">
    <location>
        <position position="331"/>
    </location>
    <ligand>
        <name>Ca(2+)</name>
        <dbReference type="ChEBI" id="CHEBI:29108"/>
    </ligand>
</feature>
<feature type="binding site" evidence="5">
    <location>
        <position position="333"/>
    </location>
    <ligand>
        <name>Ca(2+)</name>
        <dbReference type="ChEBI" id="CHEBI:29108"/>
    </ligand>
</feature>
<feature type="binding site" evidence="5">
    <location>
        <position position="335"/>
    </location>
    <ligand>
        <name>Ca(2+)</name>
        <dbReference type="ChEBI" id="CHEBI:29108"/>
    </ligand>
</feature>
<feature type="binding site" evidence="5">
    <location>
        <position position="342"/>
    </location>
    <ligand>
        <name>Ca(2+)</name>
        <dbReference type="ChEBI" id="CHEBI:29108"/>
    </ligand>
</feature>
<feature type="modified residue" description="Phosphoserine" evidence="2">
    <location>
        <position position="145"/>
    </location>
</feature>
<feature type="modified residue" description="Phosphoserine" evidence="2">
    <location>
        <position position="162"/>
    </location>
</feature>
<feature type="modified residue" description="Phosphoserine" evidence="2">
    <location>
        <position position="166"/>
    </location>
</feature>
<feature type="modified residue" description="Phosphoserine" evidence="2">
    <location>
        <position position="170"/>
    </location>
</feature>
<feature type="modified residue" description="Phosphothreonine" evidence="2">
    <location>
        <position position="173"/>
    </location>
</feature>
<feature type="modified residue" description="Phosphoserine" evidence="11 13">
    <location>
        <position position="272"/>
    </location>
</feature>
<feature type="modified residue" description="Phosphoserine" evidence="13">
    <location>
        <position position="273"/>
    </location>
</feature>
<feature type="modified residue" description="Phosphotyrosine" evidence="3">
    <location>
        <position position="288"/>
    </location>
</feature>
<feature type="modified residue" description="Phosphoserine" evidence="2">
    <location>
        <position position="307"/>
    </location>
</feature>
<feature type="modified residue" description="Phosphoserine" evidence="2">
    <location>
        <position position="475"/>
    </location>
</feature>
<feature type="modified residue" description="Phosphoserine" evidence="2">
    <location>
        <position position="482"/>
    </location>
</feature>
<feature type="modified residue" description="Phosphoserine" evidence="2">
    <location>
        <position position="489"/>
    </location>
</feature>
<feature type="modified residue" description="Phosphoserine" evidence="13">
    <location>
        <position position="539"/>
    </location>
</feature>
<feature type="modified residue" description="Phosphothreonine" evidence="13">
    <location>
        <position position="543"/>
    </location>
</feature>
<feature type="modified residue" description="Phosphoserine" evidence="2">
    <location>
        <position position="561"/>
    </location>
</feature>
<feature type="modified residue" description="Phosphoserine" evidence="12">
    <location>
        <position position="708"/>
    </location>
</feature>
<feature type="modified residue" description="Phosphoserine" evidence="2">
    <location>
        <position position="739"/>
    </location>
</feature>
<feature type="splice variant" id="VSP_038337" description="In isoform 2." evidence="8">
    <location>
        <begin position="1"/>
        <end position="244"/>
    </location>
</feature>
<feature type="splice variant" id="VSP_038336" description="In isoform 3 and isoform 4." evidence="7 9">
    <location>
        <begin position="1"/>
        <end position="52"/>
    </location>
</feature>
<feature type="splice variant" id="VSP_007956" description="In isoform 2." evidence="8">
    <original>QWETFSERSSSSQTLTQFDSNIAPADPDTAIVHPV</original>
    <variation>VSKTSLSLLEISLFTGRSFKQDRFTAGYLQYAHTP</variation>
    <location>
        <begin position="420"/>
        <end position="454"/>
    </location>
</feature>
<feature type="splice variant" id="VSP_038338" description="In isoform 3." evidence="7">
    <location>
        <begin position="420"/>
        <end position="446"/>
    </location>
</feature>
<feature type="splice variant" id="VSP_007957" description="In isoform 2." evidence="8">
    <location>
        <begin position="455"/>
        <end position="795"/>
    </location>
</feature>
<feature type="sequence conflict" description="In Ref. 1; AAB94736." evidence="10" ref="1">
    <original>V</original>
    <variation>A</variation>
    <location>
        <position position="161"/>
    </location>
</feature>
<feature type="sequence conflict" description="In Ref. 2; BAE29439." evidence="10" ref="2">
    <original>D</original>
    <variation>N</variation>
    <location>
        <position position="605"/>
    </location>
</feature>
<feature type="sequence conflict" description="In Ref. 2; BAE29439." evidence="10" ref="2">
    <original>P</original>
    <variation>T</variation>
    <location>
        <position position="701"/>
    </location>
</feature>
<feature type="helix" evidence="14">
    <location>
        <begin position="283"/>
        <end position="293"/>
    </location>
</feature>
<feature type="turn" evidence="14">
    <location>
        <begin position="294"/>
        <end position="296"/>
    </location>
</feature>
<feature type="strand" evidence="14">
    <location>
        <begin position="303"/>
        <end position="305"/>
    </location>
</feature>
<feature type="helix" evidence="14">
    <location>
        <begin position="306"/>
        <end position="316"/>
    </location>
</feature>
<feature type="helix" evidence="14">
    <location>
        <begin position="320"/>
        <end position="330"/>
    </location>
</feature>
<feature type="strand" evidence="14">
    <location>
        <begin position="335"/>
        <end position="339"/>
    </location>
</feature>
<feature type="helix" evidence="14">
    <location>
        <begin position="340"/>
        <end position="355"/>
    </location>
</feature>